<organism>
    <name type="scientific">Hepatitis B virus genotype G (isolate IG29227/2000)</name>
    <name type="common">HBV-G</name>
    <dbReference type="NCBI Taxonomy" id="489538"/>
    <lineage>
        <taxon>Viruses</taxon>
        <taxon>Riboviria</taxon>
        <taxon>Pararnavirae</taxon>
        <taxon>Artverviricota</taxon>
        <taxon>Revtraviricetes</taxon>
        <taxon>Blubervirales</taxon>
        <taxon>Hepadnaviridae</taxon>
        <taxon>Orthohepadnavirus</taxon>
        <taxon>Hepatitis B virus</taxon>
        <taxon>hepatitis B virus genotype G</taxon>
    </lineage>
</organism>
<reference key="1">
    <citation type="journal article" date="2000" name="J. Gen. Virol.">
        <title>A new genotype of hepatitis B virus: complete genome and phylogenetic relatedness.</title>
        <authorList>
            <person name="Stuyver L."/>
            <person name="De Gendt S."/>
            <person name="Van Geyt C."/>
            <person name="Zoulim F."/>
            <person name="Fried M."/>
            <person name="Schinazi R.F."/>
            <person name="Rossau R."/>
        </authorList>
    </citation>
    <scope>NUCLEOTIDE SEQUENCE [GENOMIC DNA]</scope>
</reference>
<reference key="2">
    <citation type="journal article" date="1996" name="Intervirology">
        <title>Functions of the large hepatitis B virus surface protein in viral particle morphogenesis.</title>
        <authorList>
            <person name="Bruss V."/>
            <person name="Gerhardt E."/>
            <person name="Vieluf K."/>
            <person name="Wunderlich G."/>
        </authorList>
    </citation>
    <scope>REVIEW</scope>
</reference>
<reference key="3">
    <citation type="journal article" date="1998" name="Adv. Exp. Med. Biol.">
        <title>Role of glycan processing in hepatitis B virus envelope protein trafficking.</title>
        <authorList>
            <person name="Block T.M."/>
            <person name="Lu X."/>
            <person name="Mehta A."/>
            <person name="Park J."/>
            <person name="Blumberg B.S."/>
            <person name="Dwek R."/>
        </authorList>
    </citation>
    <scope>REVIEW</scope>
</reference>
<reference key="4">
    <citation type="journal article" date="2004" name="Virus Res.">
        <title>Envelopment of the hepatitis B virus nucleocapsid.</title>
        <authorList>
            <person name="Bruss V."/>
        </authorList>
    </citation>
    <scope>REVIEW</scope>
</reference>
<reference key="5">
    <citation type="journal article" date="2006" name="Cancer Sci.">
        <title>Hepatitis B virus pre-S mutants, endoplasmic reticulum stress and hepatocarcinogenesis.</title>
        <authorList>
            <person name="Wang H.C."/>
            <person name="Huang W."/>
            <person name="Lai M.D."/>
            <person name="Su I.J."/>
        </authorList>
    </citation>
    <scope>REVIEW</scope>
</reference>
<gene>
    <name evidence="3" type="primary">S</name>
</gene>
<feature type="initiator methionine" description="Removed; by host" evidence="3">
    <location>
        <position position="1"/>
    </location>
</feature>
<feature type="chain" id="PRO_0000319095" description="Large envelope protein" evidence="3">
    <location>
        <begin position="2"/>
        <end position="399"/>
    </location>
</feature>
<feature type="topological domain" description="Intravirion; in internal conformation" evidence="3">
    <location>
        <begin position="2"/>
        <end position="252"/>
    </location>
</feature>
<feature type="topological domain" description="Virion surface; in external conformation" evidence="3">
    <location>
        <begin position="2"/>
        <end position="180"/>
    </location>
</feature>
<feature type="transmembrane region" description="Helical; Name=TM1; Note=In external conformation" evidence="3">
    <location>
        <begin position="181"/>
        <end position="201"/>
    </location>
</feature>
<feature type="topological domain" description="Intravirion; in external conformation" evidence="3">
    <location>
        <begin position="202"/>
        <end position="252"/>
    </location>
</feature>
<feature type="transmembrane region" description="Helical; Name=TM2" evidence="3">
    <location>
        <begin position="253"/>
        <end position="273"/>
    </location>
</feature>
<feature type="topological domain" description="Virion surface" evidence="3">
    <location>
        <begin position="274"/>
        <end position="347"/>
    </location>
</feature>
<feature type="transmembrane region" description="Helical" evidence="3">
    <location>
        <begin position="348"/>
        <end position="368"/>
    </location>
</feature>
<feature type="topological domain" description="Intravirion" evidence="3">
    <location>
        <begin position="369"/>
        <end position="374"/>
    </location>
</feature>
<feature type="transmembrane region" description="Helical; Name=TM3" evidence="3">
    <location>
        <begin position="375"/>
        <end position="397"/>
    </location>
</feature>
<feature type="topological domain" description="Virion surface" evidence="3">
    <location>
        <begin position="398"/>
        <end position="399"/>
    </location>
</feature>
<feature type="region of interest" description="Pre-S" evidence="3">
    <location>
        <begin position="2"/>
        <end position="173"/>
    </location>
</feature>
<feature type="region of interest" description="Pre-S1" evidence="3">
    <location>
        <begin position="2"/>
        <end position="118"/>
    </location>
</feature>
<feature type="region of interest" description="Disordered" evidence="4">
    <location>
        <begin position="69"/>
        <end position="117"/>
    </location>
</feature>
<feature type="region of interest" description="Pre-S2" evidence="3">
    <location>
        <begin position="119"/>
        <end position="173"/>
    </location>
</feature>
<feature type="lipid moiety-binding region" description="N-myristoyl glycine; by host" evidence="3">
    <location>
        <position position="2"/>
    </location>
</feature>
<feature type="glycosylation site" description="N-linked (GlcNAc...) asparagine; by host" evidence="3">
    <location>
        <position position="319"/>
    </location>
</feature>
<feature type="splice variant" id="VSP_031427" description="In isoform S." evidence="5">
    <location>
        <begin position="1"/>
        <end position="173"/>
    </location>
</feature>
<feature type="splice variant" id="VSP_031428" description="In isoform M." evidence="5">
    <location>
        <begin position="1"/>
        <end position="118"/>
    </location>
</feature>
<feature type="modified residue" description="N-acetylmethionine" evidence="5">
    <location sequence="Q9IBI3-2">
        <position position="1"/>
    </location>
</feature>
<feature type="glycosylation site" description="N-linked (GlcNAc...) asparagine" evidence="5">
    <location sequence="Q9IBI3-2">
        <position position="4"/>
    </location>
</feature>
<name>HBSAG_HBVG3</name>
<comment type="function">
    <text evidence="3">The large envelope protein exists in two topological conformations, one which is termed 'external' or Le-HBsAg and the other 'internal' or Li-HBsAg. In its external conformation the protein attaches the virus to cell receptors and thereby initiating infection. This interaction determines the species specificity and liver tropism. This attachment induces virion internalization predominantly through caveolin-mediated endocytosis. The large envelope protein also assures fusion between virion membrane and endosomal membrane. In its internal conformation the protein plays a role in virion morphogenesis and mediates the contact with the nucleocapsid like a matrix protein.</text>
</comment>
<comment type="function">
    <text evidence="3">The middle envelope protein plays an important role in the budding of the virion. It is involved in the induction of budding in a nucleocapsid independent way. In this process the majority of envelope proteins bud to form subviral lipoprotein particles of 22 nm of diameter that do not contain a nucleocapsid.</text>
</comment>
<comment type="subunit">
    <molecule>Isoform L</molecule>
    <text evidence="2">In its internal form (Li-HBsAg), interacts with the capsid protein and with the isoform S. Interacts with host chaperone CANX.</text>
</comment>
<comment type="subunit">
    <molecule>Isoform M</molecule>
    <text evidence="2">Associates with host chaperone CANX through its pre-S2 N glycan; this association may be essential for isoform M proper secretion.</text>
</comment>
<comment type="subunit">
    <molecule>Isoform S</molecule>
    <text evidence="2">Interacts with isoform L. Interacts with the antigens of satellite virus HDV (HDVAgs); this interaction is required for encapsidation of HDV genomic RNA.</text>
</comment>
<comment type="subcellular location">
    <subcellularLocation>
        <location evidence="3">Virion membrane</location>
    </subcellularLocation>
</comment>
<comment type="alternative products">
    <event type="alternative splicing"/>
    <event type="alternative initiation"/>
    <isoform>
        <id>Q9IBI3-1</id>
        <name>L</name>
        <name>Large envelope protein</name>
        <name>LHB</name>
        <name>L-HBsAg</name>
        <sequence type="displayed"/>
    </isoform>
    <isoform>
        <id>Q9IBI3-2</id>
        <name>M</name>
        <name>Middle envelope protein</name>
        <name>MHB</name>
        <name>M-HBsAg</name>
        <sequence type="described" ref="VSP_031428"/>
    </isoform>
    <isoform>
        <id>Q9IBI3-3</id>
        <name>S</name>
        <name>Small envelope protein</name>
        <name>SHB</name>
        <name>S-HBsAg</name>
        <sequence type="described" ref="VSP_031427"/>
    </isoform>
</comment>
<comment type="domain">
    <text evidence="3">The large envelope protein is synthesized with the pre-S region at the cytosolic side of the endoplasmic reticulum and, hence will be within the virion after budding. Therefore the pre-S region is not N-glycosylated. Later a post-translational translocation of N-terminal pre-S and TM1 domains occur in about 50% of proteins at the virion surface. These molecules change their topology by an unknown mechanism, resulting in exposure of pre-S region at virion surface. For isoform M in contrast, the pre-S2 region is translocated cotranslationally to the endoplasmic reticulum lumen and is N-glycosylated.</text>
</comment>
<comment type="PTM">
    <text evidence="1 3">Isoform M is N-terminally acetylated by host at a ratio of 90%, and N-glycosylated by host at the pre-S2 region.</text>
</comment>
<comment type="PTM">
    <text evidence="3">Myristoylated.</text>
</comment>
<comment type="biotechnology">
    <text>Systematic vaccination of individuals at risk of exposure to the virus has been the main method of controlling the morbidity and mortality associated with hepatitis B. The first hepatitis B vaccine was manufactured by the purification and inactivation of HBsAg obtained from the plasma of chronic hepatitis B virus carriers. The vaccine is now produced by recombinant DNA techniques and expression of the S isoform in yeast cells. The pre-S region do not seem to induce strong enough antigenic response.</text>
</comment>
<comment type="similarity">
    <text evidence="3">Belongs to the orthohepadnavirus major surface antigen family.</text>
</comment>
<protein>
    <recommendedName>
        <fullName evidence="3">Large envelope protein</fullName>
    </recommendedName>
    <alternativeName>
        <fullName evidence="3">L glycoprotein</fullName>
    </alternativeName>
    <alternativeName>
        <fullName evidence="3">L-HBsAg</fullName>
        <shortName evidence="3">LHB</shortName>
    </alternativeName>
    <alternativeName>
        <fullName evidence="3">Large S protein</fullName>
    </alternativeName>
    <alternativeName>
        <fullName evidence="3">Large surface protein</fullName>
    </alternativeName>
    <alternativeName>
        <fullName evidence="3">Major surface antigen</fullName>
    </alternativeName>
</protein>
<evidence type="ECO:0000250" key="1">
    <source>
        <dbReference type="UniProtKB" id="P03138"/>
    </source>
</evidence>
<evidence type="ECO:0000250" key="2">
    <source>
        <dbReference type="UniProtKB" id="P03141"/>
    </source>
</evidence>
<evidence type="ECO:0000255" key="3">
    <source>
        <dbReference type="HAMAP-Rule" id="MF_04075"/>
    </source>
</evidence>
<evidence type="ECO:0000256" key="4">
    <source>
        <dbReference type="SAM" id="MobiDB-lite"/>
    </source>
</evidence>
<evidence type="ECO:0000305" key="5"/>
<proteinExistence type="evidence at protein level"/>
<dbReference type="EMBL" id="AF160501">
    <property type="protein sequence ID" value="AAF34735.1"/>
    <property type="molecule type" value="Genomic_DNA"/>
</dbReference>
<dbReference type="PIR" id="JQ2048">
    <property type="entry name" value="JQ2048"/>
</dbReference>
<dbReference type="PIR" id="JQ2050">
    <property type="entry name" value="JQ2050"/>
</dbReference>
<dbReference type="PIR" id="JQ2051">
    <property type="entry name" value="JQ2051"/>
</dbReference>
<dbReference type="PIR" id="JQ2053">
    <property type="entry name" value="JQ2053"/>
</dbReference>
<dbReference type="PIR" id="JQ2054">
    <property type="entry name" value="JQ2054"/>
</dbReference>
<dbReference type="SMR" id="Q9IBI3"/>
<dbReference type="GlyCosmos" id="Q9IBI3">
    <property type="glycosylation" value="2 sites, No reported glycans"/>
</dbReference>
<dbReference type="Proteomes" id="UP000007407">
    <property type="component" value="Segment"/>
</dbReference>
<dbReference type="GO" id="GO:0016020">
    <property type="term" value="C:membrane"/>
    <property type="evidence" value="ECO:0007669"/>
    <property type="project" value="UniProtKB-UniRule"/>
</dbReference>
<dbReference type="GO" id="GO:0019031">
    <property type="term" value="C:viral envelope"/>
    <property type="evidence" value="ECO:0007669"/>
    <property type="project" value="UniProtKB-KW"/>
</dbReference>
<dbReference type="GO" id="GO:0055036">
    <property type="term" value="C:virion membrane"/>
    <property type="evidence" value="ECO:0007669"/>
    <property type="project" value="UniProtKB-SubCell"/>
</dbReference>
<dbReference type="GO" id="GO:0075513">
    <property type="term" value="P:caveolin-mediated endocytosis of virus by host cell"/>
    <property type="evidence" value="ECO:0007669"/>
    <property type="project" value="UniProtKB-KW"/>
</dbReference>
<dbReference type="GO" id="GO:0039654">
    <property type="term" value="P:fusion of virus membrane with host endosome membrane"/>
    <property type="evidence" value="ECO:0007669"/>
    <property type="project" value="UniProtKB-KW"/>
</dbReference>
<dbReference type="GO" id="GO:0019062">
    <property type="term" value="P:virion attachment to host cell"/>
    <property type="evidence" value="ECO:0007669"/>
    <property type="project" value="UniProtKB-UniRule"/>
</dbReference>
<dbReference type="HAMAP" id="MF_04075">
    <property type="entry name" value="HBV_HBSAG"/>
    <property type="match status" value="1"/>
</dbReference>
<dbReference type="InterPro" id="IPR000349">
    <property type="entry name" value="HBV_HBSAG"/>
</dbReference>
<dbReference type="Pfam" id="PF00695">
    <property type="entry name" value="vMSA"/>
    <property type="match status" value="1"/>
</dbReference>
<organismHost>
    <name type="scientific">Homo sapiens</name>
    <name type="common">Human</name>
    <dbReference type="NCBI Taxonomy" id="9606"/>
</organismHost>
<organismHost>
    <name type="scientific">Pan troglodytes</name>
    <name type="common">Chimpanzee</name>
    <dbReference type="NCBI Taxonomy" id="9598"/>
</organismHost>
<accession>Q9IBI3</accession>
<keyword id="KW-0007">Acetylation</keyword>
<keyword id="KW-0024">Alternative initiation</keyword>
<keyword id="KW-0025">Alternative splicing</keyword>
<keyword id="KW-1166">Caveolin-mediated endocytosis of virus by host</keyword>
<keyword id="KW-1170">Fusion of virus membrane with host endosomal membrane</keyword>
<keyword id="KW-1168">Fusion of virus membrane with host membrane</keyword>
<keyword id="KW-0325">Glycoprotein</keyword>
<keyword id="KW-0945">Host-virus interaction</keyword>
<keyword id="KW-0449">Lipoprotein</keyword>
<keyword id="KW-0472">Membrane</keyword>
<keyword id="KW-0519">Myristate</keyword>
<keyword id="KW-0812">Transmembrane</keyword>
<keyword id="KW-1133">Transmembrane helix</keyword>
<keyword id="KW-1161">Viral attachment to host cell</keyword>
<keyword id="KW-0261">Viral envelope protein</keyword>
<keyword id="KW-1162">Viral penetration into host cytoplasm</keyword>
<keyword id="KW-0946">Virion</keyword>
<keyword id="KW-1164">Virus endocytosis by host</keyword>
<keyword id="KW-1160">Virus entry into host cell</keyword>
<sequence length="399" mass="43885">MGLSWTVPLEWGKNLSASNPLGFLPDHQLDPAFRANTNNPDWDFNPKKDPWPEANKVGVGAYGPGFTPPHGGLLGWSPQSQGTLTTLPADPPPASTNRQSGRQPTPISPPLRDSHPQAMQWNSTAFHQALQNPKVRGLYFPAGGSSSGIVNPVPTIASHISSIFSRIGDPAPNMENITSGFLGPLLVLQAGFFLLTRILTIPQSLDSWWTSLNFLGGVPVCPGLNSQSPTSNHSPISCPPTCPGYRWMCLRRFIIFLFILLLCLIFLLVLLDYQGMLPVCPLIPGSSTTSTGPCKTCTTPAQGNSMYPSCCCTKPSDGNCTCIPIPSSWAFAKYLWEWASVRFSWLSLLVPFVQWFVGLSPTVWLSAIWMMWYWGPNLYNILSPFIPLLPIFFCLWVYI</sequence>